<proteinExistence type="evidence at protein level"/>
<gene>
    <name evidence="18" type="primary">Dnm2</name>
    <name type="synonym">Dyn2</name>
</gene>
<keyword id="KW-0007">Acetylation</keyword>
<keyword id="KW-0025">Alternative splicing</keyword>
<keyword id="KW-0965">Cell junction</keyword>
<keyword id="KW-0966">Cell projection</keyword>
<keyword id="KW-0168">Coated pit</keyword>
<keyword id="KW-0963">Cytoplasm</keyword>
<keyword id="KW-0968">Cytoplasmic vesicle</keyword>
<keyword id="KW-0206">Cytoskeleton</keyword>
<keyword id="KW-0903">Direct protein sequencing</keyword>
<keyword id="KW-0254">Endocytosis</keyword>
<keyword id="KW-0967">Endosome</keyword>
<keyword id="KW-0342">GTP-binding</keyword>
<keyword id="KW-0378">Hydrolase</keyword>
<keyword id="KW-0472">Membrane</keyword>
<keyword id="KW-0493">Microtubule</keyword>
<keyword id="KW-0505">Motor protein</keyword>
<keyword id="KW-0547">Nucleotide-binding</keyword>
<keyword id="KW-0581">Phagocytosis</keyword>
<keyword id="KW-0597">Phosphoprotein</keyword>
<keyword id="KW-1185">Reference proteome</keyword>
<keyword id="KW-0770">Synapse</keyword>
<keyword id="KW-0771">Synaptosome</keyword>
<comment type="function">
    <text evidence="1 2 11 12 14">Catalyzes the hydrolysis of GTP and utilizes this energy to mediate vesicle scission at plasma membrane during endocytosis and filament remodeling at many actin structures during organization of the actin cytoskeleton (By similarity). Plays an important role in vesicular trafficking processes, namely clathrin-mediated endocytosis (CME), exocytic and clathrin-coated vesicle from the trans-Golgi network, and PDGF stimulated macropinocytosis (PubMed:18923138). During vesicular trafficking process, associates to the membrane, through lipid binding, and self-assembles into ring-like structure through oligomerization to form a helical polymer around the vesicle membrane and leading to vesicle scission (By similarity). Plays a role in organization of the actin cytoskeleton by mediating arrangement of stress fibers and actin bundles in podocytes (By similarity). During organization of the actin cytoskeleton, self-assembles into ring-like structure that directly bundles actin filaments to form typical membrane tubules decorated with dynamin spiral polymers (PubMed:33113375). Self-assembly increases GTPase activity and the GTP hydrolysis causes the rapid depolymerization of dynamin spiral polymers, and results in dispersion of actin bundles (By similarity). Remodels, through its interaction with CTTN, bundled actin filaments in a GTPase-dependent manner and plays a role in orchestrating the global actomyosin cytoskeleton (By similarity). The interaction with CTTN stabilizes the interaction of DNM2 and actin filaments and stimulates the intrinsic GTPase activity that results in actin filament-barbed ends and increases the sensitivity of filaments in bundles to the actin depolymerizing factor, CFL1 (By similarity). Plays a role in the autophagy process, by participating in the formation of ATG9A vesicles destined for the autophagosomes through its interaction with SNX18, by mediating recycling endosome scission leading to autophagosome release through MAP1LC3B interaction (By similarity). Also regulates maturation of apoptotic cell corpse-containing phagosomes by recruiting PIK3C3 to the phagosome membrane (PubMed:18425118). Also plays a role in cytokinesis (PubMed:18923138). May participate in centrosome cohesion through its interaction with TUBG1 (By similarity). Plays a role in the regulation of neuron morphology, axon growth and formation of neuronal growth cones (By similarity). Involved in membrane tubulation (By similarity).</text>
</comment>
<comment type="catalytic activity">
    <reaction evidence="2">
        <text>GTP + H2O = GDP + phosphate + H(+)</text>
        <dbReference type="Rhea" id="RHEA:19669"/>
        <dbReference type="ChEBI" id="CHEBI:15377"/>
        <dbReference type="ChEBI" id="CHEBI:15378"/>
        <dbReference type="ChEBI" id="CHEBI:37565"/>
        <dbReference type="ChEBI" id="CHEBI:43474"/>
        <dbReference type="ChEBI" id="CHEBI:58189"/>
        <dbReference type="EC" id="3.6.5.5"/>
    </reaction>
    <physiologicalReaction direction="left-to-right" evidence="1 2">
        <dbReference type="Rhea" id="RHEA:19670"/>
    </physiologicalReaction>
</comment>
<comment type="subunit">
    <text evidence="1 2 8 9 10 11 17">Oligomerizes into a helical polymer that self-assembles around the vesicle membrane, when associated to the menbrane through lipid binding. Interacts with SHANK1 and SHANK2. Interacts with SNX9. Interacts (via C-terminal proline-rich domain (PRD)) with SNX18 (via SH3 domain); this interaction regulates ATG9A and ATG16L1 trafficking from recycling endosomes to sites of autophagosome formation. Interacts with SNX33 (via SH3 domain). Interacts with MYO1E (via SH3 domain). Interacts with PSTPIP1 (via SH3 domain). Interacts with CTNND2. Interacts (via C-terminal proline-rich domain (PRD)) with BIN1 (via SH3 domain); this interaction allows the recruitment of DNM2 to the membrane tubules and inhibits self-assembly-stimulated GTPase activity on the membrane. Interacts with GABARAP, GABARAPL1 and GABARAPL2. Interacts with MAP1LC3B (the lipidate and non-lipidated LC3 form); this interaction mediates recycling endosome scission leading to autophagosome release. Interacts with ITSN1 (By similarity). Interacts (via C-terminal proline-rich domain (PRD)) with SH3BP4 (via SH3 domain); this interaction controls the GTPase activity and is prevented by EGFR-induced tyrosine phosphorylation of either DNM2 or SH3BP4 (PubMed:16325581). Interacts with MYOF (PubMed:17702744). May interact with PIK3C3 (Probable). May be a component of a complex composed of RAB5A (in GDP-bound form), DYN2 and PIK3C3 (PubMed:18425118). Interacts with SDC4; this interaction is markedly enhanced at focal ahesion site upon induction of focal adhesions and stress-fiber formation (PubMed:15694365). Interacts with ACTN1. Interacts with CTTN; this interaction stimulates the intrinsic GTPase activity of DNM2 and stabilizes the association of DNM2 and actin filaments; in addition this interaction is stimulated by ligand binding to the receptor, leading to the recruitment of the DNM2-CTTN complex to the sequestered receptor-ligand complex to its internalization. Interacts with NOSTRIN (via SH3 domain); this interaction allows the recruitment of NOS3 to dynamin-positive structures. Interacts with TUBG1; this interaction may participate in centrosome cohesion (By similarity).</text>
</comment>
<comment type="interaction">
    <interactant intactId="EBI-642337">
        <id>P39054</id>
    </interactant>
    <interactant intactId="EBI-775139">
        <id>Q7TQF7</id>
        <label>Amph</label>
    </interactant>
    <organismsDiffer>false</organismsDiffer>
    <experiments>5</experiments>
</comment>
<comment type="interaction">
    <interactant intactId="EBI-642337">
        <id>P39054</id>
    </interactant>
    <interactant intactId="EBI-397955">
        <id>Q60598</id>
        <label>Cttn</label>
    </interactant>
    <organismsDiffer>false</organismsDiffer>
    <experiments>2</experiments>
</comment>
<comment type="interaction">
    <interactant intactId="EBI-642337">
        <id>P39054</id>
    </interactant>
    <interactant intactId="EBI-2530463">
        <id>Q01406</id>
        <label>CTTN1</label>
    </interactant>
    <organismsDiffer>true</organismsDiffer>
    <experiments>2</experiments>
</comment>
<comment type="subcellular location">
    <subcellularLocation>
        <location evidence="2">Cytoplasm</location>
        <location evidence="2">Cytoskeleton</location>
    </subcellularLocation>
    <subcellularLocation>
        <location evidence="2">Cytoplasmic vesicle</location>
        <location evidence="2">Clathrin-coated vesicle</location>
    </subcellularLocation>
    <subcellularLocation>
        <location evidence="2">Cell projection</location>
        <location evidence="2">Uropodium</location>
    </subcellularLocation>
    <subcellularLocation>
        <location evidence="2">Endosome</location>
    </subcellularLocation>
    <subcellularLocation>
        <location evidence="2">Cytoplasm</location>
        <location evidence="2">Cytoskeleton</location>
        <location evidence="2">Microtubule organizing center</location>
        <location evidence="2">Centrosome</location>
    </subcellularLocation>
    <subcellularLocation>
        <location evidence="2">Cytoplasm</location>
        <location evidence="2">Cytoskeleton</location>
        <location evidence="2">Microtubule organizing center</location>
        <location evidence="2">Centrosome</location>
        <location evidence="2">Centriole</location>
    </subcellularLocation>
    <subcellularLocation>
        <location evidence="2">Recycling endosome</location>
    </subcellularLocation>
    <subcellularLocation>
        <location evidence="11">Cell projection</location>
        <location evidence="11">Phagocytic cup</location>
    </subcellularLocation>
    <subcellularLocation>
        <location evidence="11">Cytoplasmic vesicle</location>
        <location evidence="11">Phagosome membrane</location>
        <topology evidence="11">Peripheral membrane protein</topology>
    </subcellularLocation>
    <subcellularLocation>
        <location evidence="14">Cell projection</location>
        <location evidence="14">Podosome</location>
    </subcellularLocation>
    <subcellularLocation>
        <location evidence="1">Cytoplasm</location>
    </subcellularLocation>
    <subcellularLocation>
        <location evidence="1">Cell junction</location>
    </subcellularLocation>
    <subcellularLocation>
        <location evidence="1">Postsynaptic density</location>
    </subcellularLocation>
    <subcellularLocation>
        <location evidence="1">Synapse</location>
        <location evidence="1">Synaptosome</location>
    </subcellularLocation>
    <subcellularLocation>
        <location evidence="1">Midbody</location>
    </subcellularLocation>
    <subcellularLocation>
        <location evidence="1">Membrane</location>
        <location evidence="1">Clathrin-coated pit</location>
    </subcellularLocation>
    <text evidence="1 2 8 11">Localized in recycling endosomes fragment to release nascent autophagosomes (By similarity). Co-localizes with PIK3C3 and RAB5A to the nascent phagosome (PubMed:18425118). Localized at focal ahesion site upon induction of focal adhesions and stress-fiber formation, when interacts with SDC4 (PubMed:15694365). Exists as a dynamic component of the centrosome. Associates with clathrin-coated vesicles at both the plasma membrane and the trans-Golgi network (TGN) (By similarity).</text>
</comment>
<comment type="alternative products">
    <event type="alternative splicing"/>
    <isoform>
        <id>P39054-1</id>
        <name>1</name>
        <sequence type="displayed"/>
    </isoform>
    <isoform>
        <id>P39054-2</id>
        <name>2</name>
        <sequence type="described" ref="VSP_001326"/>
    </isoform>
</comment>
<comment type="tissue specificity">
    <text evidence="13">Expressed in most tissues during embryonic development, including the peripheral nervous system although no expression is evident in skeletal muscle or heart.</text>
</comment>
<comment type="PTM">
    <text evidence="1 2 9">Phosphorylation at Ser-848 by GSK3-alpha relieves the inhibition of BIN1 and promotes endocytosis. Phosphorylation at Ser-764 by CDK1 is greatly increased upon mitotic entry (By similarity). It regulates cytokinesis downstream of calcineurin, and does not affect clathrin-mediated endocytosis (By similarity). Dephosphorylated by calcineurin/PP2 during cytokinesis in a Ca(2+)- and calmodulin-dependent manner (By similarity). Phosphorylated on tyrosine residues by EGFR (PubMed:16325581). Phosphorylated on tyrosine residues after activation of SRC (By similarity).</text>
</comment>
<comment type="disruption phenotype">
    <text evidence="12">Exhibits growth and cytokinesis defects.</text>
</comment>
<comment type="similarity">
    <text evidence="6">Belongs to the TRAFAC class dynamin-like GTPase superfamily. Dynamin/Fzo/YdjA family.</text>
</comment>
<reference key="1">
    <citation type="journal article" date="1997" name="Genomics">
        <title>Dynamin genes Dnm1 and Dnm2 are located on proximal mouse chromosomes 2 and 9, respectively.</title>
        <authorList>
            <person name="Klocke R."/>
            <person name="Augustin A."/>
            <person name="Ronsiek M."/>
            <person name="Stief A."/>
            <person name="van der Putten H."/>
            <person name="Jockusch H."/>
        </authorList>
    </citation>
    <scope>NUCLEOTIDE SEQUENCE [MRNA] (ISOFORM 2)</scope>
    <source>
        <strain>NIH Swiss</strain>
    </source>
</reference>
<reference key="2">
    <citation type="journal article" date="2005" name="Science">
        <title>The transcriptional landscape of the mammalian genome.</title>
        <authorList>
            <person name="Carninci P."/>
            <person name="Kasukawa T."/>
            <person name="Katayama S."/>
            <person name="Gough J."/>
            <person name="Frith M.C."/>
            <person name="Maeda N."/>
            <person name="Oyama R."/>
            <person name="Ravasi T."/>
            <person name="Lenhard B."/>
            <person name="Wells C."/>
            <person name="Kodzius R."/>
            <person name="Shimokawa K."/>
            <person name="Bajic V.B."/>
            <person name="Brenner S.E."/>
            <person name="Batalov S."/>
            <person name="Forrest A.R."/>
            <person name="Zavolan M."/>
            <person name="Davis M.J."/>
            <person name="Wilming L.G."/>
            <person name="Aidinis V."/>
            <person name="Allen J.E."/>
            <person name="Ambesi-Impiombato A."/>
            <person name="Apweiler R."/>
            <person name="Aturaliya R.N."/>
            <person name="Bailey T.L."/>
            <person name="Bansal M."/>
            <person name="Baxter L."/>
            <person name="Beisel K.W."/>
            <person name="Bersano T."/>
            <person name="Bono H."/>
            <person name="Chalk A.M."/>
            <person name="Chiu K.P."/>
            <person name="Choudhary V."/>
            <person name="Christoffels A."/>
            <person name="Clutterbuck D.R."/>
            <person name="Crowe M.L."/>
            <person name="Dalla E."/>
            <person name="Dalrymple B.P."/>
            <person name="de Bono B."/>
            <person name="Della Gatta G."/>
            <person name="di Bernardo D."/>
            <person name="Down T."/>
            <person name="Engstrom P."/>
            <person name="Fagiolini M."/>
            <person name="Faulkner G."/>
            <person name="Fletcher C.F."/>
            <person name="Fukushima T."/>
            <person name="Furuno M."/>
            <person name="Futaki S."/>
            <person name="Gariboldi M."/>
            <person name="Georgii-Hemming P."/>
            <person name="Gingeras T.R."/>
            <person name="Gojobori T."/>
            <person name="Green R.E."/>
            <person name="Gustincich S."/>
            <person name="Harbers M."/>
            <person name="Hayashi Y."/>
            <person name="Hensch T.K."/>
            <person name="Hirokawa N."/>
            <person name="Hill D."/>
            <person name="Huminiecki L."/>
            <person name="Iacono M."/>
            <person name="Ikeo K."/>
            <person name="Iwama A."/>
            <person name="Ishikawa T."/>
            <person name="Jakt M."/>
            <person name="Kanapin A."/>
            <person name="Katoh M."/>
            <person name="Kawasawa Y."/>
            <person name="Kelso J."/>
            <person name="Kitamura H."/>
            <person name="Kitano H."/>
            <person name="Kollias G."/>
            <person name="Krishnan S.P."/>
            <person name="Kruger A."/>
            <person name="Kummerfeld S.K."/>
            <person name="Kurochkin I.V."/>
            <person name="Lareau L.F."/>
            <person name="Lazarevic D."/>
            <person name="Lipovich L."/>
            <person name="Liu J."/>
            <person name="Liuni S."/>
            <person name="McWilliam S."/>
            <person name="Madan Babu M."/>
            <person name="Madera M."/>
            <person name="Marchionni L."/>
            <person name="Matsuda H."/>
            <person name="Matsuzawa S."/>
            <person name="Miki H."/>
            <person name="Mignone F."/>
            <person name="Miyake S."/>
            <person name="Morris K."/>
            <person name="Mottagui-Tabar S."/>
            <person name="Mulder N."/>
            <person name="Nakano N."/>
            <person name="Nakauchi H."/>
            <person name="Ng P."/>
            <person name="Nilsson R."/>
            <person name="Nishiguchi S."/>
            <person name="Nishikawa S."/>
            <person name="Nori F."/>
            <person name="Ohara O."/>
            <person name="Okazaki Y."/>
            <person name="Orlando V."/>
            <person name="Pang K.C."/>
            <person name="Pavan W.J."/>
            <person name="Pavesi G."/>
            <person name="Pesole G."/>
            <person name="Petrovsky N."/>
            <person name="Piazza S."/>
            <person name="Reed J."/>
            <person name="Reid J.F."/>
            <person name="Ring B.Z."/>
            <person name="Ringwald M."/>
            <person name="Rost B."/>
            <person name="Ruan Y."/>
            <person name="Salzberg S.L."/>
            <person name="Sandelin A."/>
            <person name="Schneider C."/>
            <person name="Schoenbach C."/>
            <person name="Sekiguchi K."/>
            <person name="Semple C.A."/>
            <person name="Seno S."/>
            <person name="Sessa L."/>
            <person name="Sheng Y."/>
            <person name="Shibata Y."/>
            <person name="Shimada H."/>
            <person name="Shimada K."/>
            <person name="Silva D."/>
            <person name="Sinclair B."/>
            <person name="Sperling S."/>
            <person name="Stupka E."/>
            <person name="Sugiura K."/>
            <person name="Sultana R."/>
            <person name="Takenaka Y."/>
            <person name="Taki K."/>
            <person name="Tammoja K."/>
            <person name="Tan S.L."/>
            <person name="Tang S."/>
            <person name="Taylor M.S."/>
            <person name="Tegner J."/>
            <person name="Teichmann S.A."/>
            <person name="Ueda H.R."/>
            <person name="van Nimwegen E."/>
            <person name="Verardo R."/>
            <person name="Wei C.L."/>
            <person name="Yagi K."/>
            <person name="Yamanishi H."/>
            <person name="Zabarovsky E."/>
            <person name="Zhu S."/>
            <person name="Zimmer A."/>
            <person name="Hide W."/>
            <person name="Bult C."/>
            <person name="Grimmond S.M."/>
            <person name="Teasdale R.D."/>
            <person name="Liu E.T."/>
            <person name="Brusic V."/>
            <person name="Quackenbush J."/>
            <person name="Wahlestedt C."/>
            <person name="Mattick J.S."/>
            <person name="Hume D.A."/>
            <person name="Kai C."/>
            <person name="Sasaki D."/>
            <person name="Tomaru Y."/>
            <person name="Fukuda S."/>
            <person name="Kanamori-Katayama M."/>
            <person name="Suzuki M."/>
            <person name="Aoki J."/>
            <person name="Arakawa T."/>
            <person name="Iida J."/>
            <person name="Imamura K."/>
            <person name="Itoh M."/>
            <person name="Kato T."/>
            <person name="Kawaji H."/>
            <person name="Kawagashira N."/>
            <person name="Kawashima T."/>
            <person name="Kojima M."/>
            <person name="Kondo S."/>
            <person name="Konno H."/>
            <person name="Nakano K."/>
            <person name="Ninomiya N."/>
            <person name="Nishio T."/>
            <person name="Okada M."/>
            <person name="Plessy C."/>
            <person name="Shibata K."/>
            <person name="Shiraki T."/>
            <person name="Suzuki S."/>
            <person name="Tagami M."/>
            <person name="Waki K."/>
            <person name="Watahiki A."/>
            <person name="Okamura-Oho Y."/>
            <person name="Suzuki H."/>
            <person name="Kawai J."/>
            <person name="Hayashizaki Y."/>
        </authorList>
    </citation>
    <scope>NUCLEOTIDE SEQUENCE [LARGE SCALE MRNA] (ISOFORM 1)</scope>
    <source>
        <strain>C57BL/6J</strain>
        <tissue>Liver</tissue>
    </source>
</reference>
<reference key="3">
    <citation type="submission" date="2007-04" db="UniProtKB">
        <authorList>
            <person name="Lubec G."/>
            <person name="Kang S.U."/>
        </authorList>
    </citation>
    <scope>PROTEIN SEQUENCE OF 45-54; 91-107; 114-142; 207-217; 230-237; 300-309; 370-376 AND 678-688</scope>
    <scope>IDENTIFICATION BY MASS SPECTROMETRY</scope>
    <source>
        <strain>C57BL/6J</strain>
        <tissue>Brain</tissue>
    </source>
</reference>
<reference key="4">
    <citation type="journal article" date="2005" name="Biochem. Biophys. Res. Commun.">
        <title>Dynamin II interacts with syndecan-4, a regulator of focal adhesion and stress-fiber formation.</title>
        <authorList>
            <person name="Yoo J."/>
            <person name="Jeong M.J."/>
            <person name="Cho H.J."/>
            <person name="Oh E.S."/>
            <person name="Han M.Y."/>
        </authorList>
    </citation>
    <scope>INTERACTION WITH SDC4</scope>
    <scope>SUBCELLULAR LOCATION</scope>
</reference>
<reference key="5">
    <citation type="journal article" date="2005" name="Cell">
        <title>TTP specifically regulates the internalization of the transferrin receptor.</title>
        <authorList>
            <person name="Tosoni D."/>
            <person name="Puri C."/>
            <person name="Confalonieri S."/>
            <person name="Salcini A.E."/>
            <person name="De Camilli P."/>
            <person name="Tacchetti C."/>
            <person name="Di Fiore P.P."/>
        </authorList>
    </citation>
    <scope>INTERACTION WITH SH3BP4</scope>
</reference>
<reference key="6">
    <citation type="journal article" date="2007" name="J. Biol. Chem.">
        <title>Myoferlin regulates vascular endothelial growth factor receptor-2 stability and function.</title>
        <authorList>
            <person name="Bernatchez P.N."/>
            <person name="Acevedo L."/>
            <person name="Fernandez-Hernando C."/>
            <person name="Murata T."/>
            <person name="Chalouni C."/>
            <person name="Kim J."/>
            <person name="Erdjument-Bromage H."/>
            <person name="Shah V."/>
            <person name="Gratton J.-P."/>
            <person name="McNally E.M."/>
            <person name="Tempst P."/>
            <person name="Sessa W.C."/>
        </authorList>
    </citation>
    <scope>INTERACTION WITH MYOF</scope>
</reference>
<reference key="7">
    <citation type="journal article" date="2008" name="Mol. Biol. Cell">
        <title>Isoform and splice-variant specific functions of dynamin-2 revealed by analysis of conditional knock-out cells.</title>
        <authorList>
            <person name="Liu Y.W."/>
            <person name="Surka M.C."/>
            <person name="Schroeter T."/>
            <person name="Lukiyanchuk V."/>
            <person name="Schmid S.L."/>
        </authorList>
    </citation>
    <scope>FUNCTION</scope>
    <scope>DISRUPTION PHENOTYPE</scope>
</reference>
<reference key="8">
    <citation type="journal article" date="2008" name="Nat. Cell Biol.">
        <title>A pathway for phagosome maturation during engulfment of apoptotic cells.</title>
        <authorList>
            <person name="Kinchen J.M."/>
            <person name="Doukoumetzidis K."/>
            <person name="Almendinger J."/>
            <person name="Stergiou L."/>
            <person name="Tosello-Trampont A."/>
            <person name="Sifri C.D."/>
            <person name="Hengartner M.O."/>
            <person name="Ravichandran K.S."/>
        </authorList>
    </citation>
    <scope>FUNCTION</scope>
    <scope>INTERACTION WITH PIK3C3</scope>
    <scope>SUBCELLULAR LOCATION</scope>
    <scope>MUTAGENESIS OF LYS-44</scope>
</reference>
<reference key="9">
    <citation type="journal article" date="2010" name="Cell">
        <title>A tissue-specific atlas of mouse protein phosphorylation and expression.</title>
        <authorList>
            <person name="Huttlin E.L."/>
            <person name="Jedrychowski M.P."/>
            <person name="Elias J.E."/>
            <person name="Goswami T."/>
            <person name="Rad R."/>
            <person name="Beausoleil S.A."/>
            <person name="Villen J."/>
            <person name="Haas W."/>
            <person name="Sowa M.E."/>
            <person name="Gygi S.P."/>
        </authorList>
    </citation>
    <scope>IDENTIFICATION BY MASS SPECTROMETRY [LARGE SCALE ANALYSIS]</scope>
    <source>
        <tissue>Brain</tissue>
        <tissue>Brown adipose tissue</tissue>
        <tissue>Heart</tissue>
        <tissue>Kidney</tissue>
        <tissue>Liver</tissue>
        <tissue>Lung</tissue>
        <tissue>Pancreas</tissue>
        <tissue>Spleen</tissue>
        <tissue>Testis</tissue>
    </source>
</reference>
<reference key="10">
    <citation type="journal article" date="2013" name="Eur. J. Hum. Genet.">
        <title>Dynamin 2 homozygous mutation in humans with a lethal congenital syndrome.</title>
        <authorList>
            <person name="Koutsopoulos O.S."/>
            <person name="Kretz C."/>
            <person name="Weller C.M."/>
            <person name="Roux A."/>
            <person name="Mojzisova H."/>
            <person name="Boehm J."/>
            <person name="Koch C."/>
            <person name="Toussaint A."/>
            <person name="Heckel E."/>
            <person name="Stemkens D."/>
            <person name="Ter Horst S.A."/>
            <person name="Thibault C."/>
            <person name="Koch M."/>
            <person name="Mehdi S.Q."/>
            <person name="Bijlsma E.K."/>
            <person name="Mandel J.L."/>
            <person name="Vermot J."/>
            <person name="Laporte J."/>
        </authorList>
    </citation>
    <scope>TISSUE SPECIFICITY</scope>
</reference>
<reference key="11">
    <citation type="journal article" date="2013" name="Mol. Cell">
        <title>SIRT5-mediated lysine desuccinylation impacts diverse metabolic pathways.</title>
        <authorList>
            <person name="Park J."/>
            <person name="Chen Y."/>
            <person name="Tishkoff D.X."/>
            <person name="Peng C."/>
            <person name="Tan M."/>
            <person name="Dai L."/>
            <person name="Xie Z."/>
            <person name="Zhang Y."/>
            <person name="Zwaans B.M."/>
            <person name="Skinner M.E."/>
            <person name="Lombard D.B."/>
            <person name="Zhao Y."/>
        </authorList>
    </citation>
    <scope>ACETYLATION [LARGE SCALE ANALYSIS] AT LYS-299</scope>
    <scope>IDENTIFICATION BY MASS SPECTROMETRY [LARGE SCALE ANALYSIS]</scope>
    <source>
        <tissue>Embryonic fibroblast</tissue>
    </source>
</reference>
<reference key="12">
    <citation type="journal article" date="2020" name="Cell Rep.">
        <title>Dynamin-2 Regulates Postsynaptic Cytoskeleton Organization and Neuromuscular Junction Development.</title>
        <authorList>
            <person name="Lin S.S."/>
            <person name="Hsieh T.L."/>
            <person name="Liou G.G."/>
            <person name="Li T.N."/>
            <person name="Lin H.C."/>
            <person name="Chang C.W."/>
            <person name="Wu H.Y."/>
            <person name="Yao C.K."/>
            <person name="Liu Y.W."/>
        </authorList>
    </citation>
    <scope>FUNCTION</scope>
    <scope>SUBCELLULAR LOCATION</scope>
</reference>
<evidence type="ECO:0000250" key="1">
    <source>
        <dbReference type="UniProtKB" id="P39052"/>
    </source>
</evidence>
<evidence type="ECO:0000250" key="2">
    <source>
        <dbReference type="UniProtKB" id="P50570"/>
    </source>
</evidence>
<evidence type="ECO:0000250" key="3">
    <source>
        <dbReference type="UniProtKB" id="Q05193"/>
    </source>
</evidence>
<evidence type="ECO:0000255" key="4">
    <source>
        <dbReference type="PROSITE-ProRule" id="PRU00145"/>
    </source>
</evidence>
<evidence type="ECO:0000255" key="5">
    <source>
        <dbReference type="PROSITE-ProRule" id="PRU00720"/>
    </source>
</evidence>
<evidence type="ECO:0000255" key="6">
    <source>
        <dbReference type="PROSITE-ProRule" id="PRU01055"/>
    </source>
</evidence>
<evidence type="ECO:0000256" key="7">
    <source>
        <dbReference type="SAM" id="MobiDB-lite"/>
    </source>
</evidence>
<evidence type="ECO:0000269" key="8">
    <source>
    </source>
</evidence>
<evidence type="ECO:0000269" key="9">
    <source>
    </source>
</evidence>
<evidence type="ECO:0000269" key="10">
    <source>
    </source>
</evidence>
<evidence type="ECO:0000269" key="11">
    <source>
    </source>
</evidence>
<evidence type="ECO:0000269" key="12">
    <source>
    </source>
</evidence>
<evidence type="ECO:0000269" key="13">
    <source>
    </source>
</evidence>
<evidence type="ECO:0000269" key="14">
    <source>
    </source>
</evidence>
<evidence type="ECO:0000303" key="15">
    <source>
    </source>
</evidence>
<evidence type="ECO:0000305" key="16"/>
<evidence type="ECO:0000305" key="17">
    <source>
    </source>
</evidence>
<evidence type="ECO:0000312" key="18">
    <source>
        <dbReference type="MGI" id="MGI:109547"/>
    </source>
</evidence>
<evidence type="ECO:0007744" key="19">
    <source>
    </source>
</evidence>
<dbReference type="EC" id="3.6.5.5" evidence="1 2"/>
<dbReference type="EMBL" id="L31398">
    <property type="protein sequence ID" value="AAA40523.1"/>
    <property type="molecule type" value="mRNA"/>
</dbReference>
<dbReference type="EMBL" id="AK005012">
    <property type="protein sequence ID" value="BAB23745.1"/>
    <property type="molecule type" value="mRNA"/>
</dbReference>
<dbReference type="CCDS" id="CCDS57657.1">
    <molecule id="P39054-1"/>
</dbReference>
<dbReference type="CCDS" id="CCDS57659.1">
    <molecule id="P39054-2"/>
</dbReference>
<dbReference type="RefSeq" id="NP_001240822.1">
    <molecule id="P39054-1"/>
    <property type="nucleotide sequence ID" value="NM_001253893.1"/>
</dbReference>
<dbReference type="RefSeq" id="NP_001240823.1">
    <property type="nucleotide sequence ID" value="NM_001253894.1"/>
</dbReference>
<dbReference type="RefSeq" id="NP_031897.2">
    <molecule id="P39054-2"/>
    <property type="nucleotide sequence ID" value="NM_007871.2"/>
</dbReference>
<dbReference type="BMRB" id="P39054"/>
<dbReference type="SMR" id="P39054"/>
<dbReference type="BioGRID" id="199258">
    <property type="interactions" value="37"/>
</dbReference>
<dbReference type="FunCoup" id="P39054">
    <property type="interactions" value="3071"/>
</dbReference>
<dbReference type="IntAct" id="P39054">
    <property type="interactions" value="21"/>
</dbReference>
<dbReference type="MINT" id="P39054"/>
<dbReference type="STRING" id="10090.ENSMUSP00000133564"/>
<dbReference type="GlyGen" id="P39054">
    <property type="glycosylation" value="3 sites, 1 O-linked glycan (1 site)"/>
</dbReference>
<dbReference type="iPTMnet" id="P39054"/>
<dbReference type="PhosphoSitePlus" id="P39054"/>
<dbReference type="SwissPalm" id="P39054"/>
<dbReference type="REPRODUCTION-2DPAGE" id="IPI00131445"/>
<dbReference type="jPOST" id="P39054"/>
<dbReference type="PaxDb" id="10090-ENSMUSP00000133564"/>
<dbReference type="PeptideAtlas" id="P39054"/>
<dbReference type="ProteomicsDB" id="277426">
    <molecule id="P39054-1"/>
</dbReference>
<dbReference type="ProteomicsDB" id="277427">
    <molecule id="P39054-2"/>
</dbReference>
<dbReference type="Pumba" id="P39054"/>
<dbReference type="Antibodypedia" id="25505">
    <property type="antibodies" value="258 antibodies from 34 providers"/>
</dbReference>
<dbReference type="DNASU" id="13430"/>
<dbReference type="Ensembl" id="ENSMUST00000091087.13">
    <molecule id="P39054-2"/>
    <property type="protein sequence ID" value="ENSMUSP00000088616.7"/>
    <property type="gene ID" value="ENSMUSG00000033335.19"/>
</dbReference>
<dbReference type="Ensembl" id="ENSMUST00000172482.8">
    <molecule id="P39054-1"/>
    <property type="protein sequence ID" value="ENSMUSP00000133564.2"/>
    <property type="gene ID" value="ENSMUSG00000033335.19"/>
</dbReference>
<dbReference type="GeneID" id="13430"/>
<dbReference type="KEGG" id="mmu:13430"/>
<dbReference type="UCSC" id="uc009olk.2">
    <molecule id="P39054-2"/>
    <property type="organism name" value="mouse"/>
</dbReference>
<dbReference type="UCSC" id="uc029wxt.1">
    <molecule id="P39054-1"/>
    <property type="organism name" value="mouse"/>
</dbReference>
<dbReference type="AGR" id="MGI:109547"/>
<dbReference type="CTD" id="1785"/>
<dbReference type="MGI" id="MGI:109547">
    <property type="gene designation" value="Dnm2"/>
</dbReference>
<dbReference type="VEuPathDB" id="HostDB:ENSMUSG00000033335"/>
<dbReference type="eggNOG" id="KOG0446">
    <property type="taxonomic scope" value="Eukaryota"/>
</dbReference>
<dbReference type="GeneTree" id="ENSGT00940000155764"/>
<dbReference type="HOGENOM" id="CLU_008964_5_0_1"/>
<dbReference type="InParanoid" id="P39054"/>
<dbReference type="PhylomeDB" id="P39054"/>
<dbReference type="TreeFam" id="TF300362"/>
<dbReference type="BRENDA" id="3.6.5.5">
    <property type="organism ID" value="3474"/>
</dbReference>
<dbReference type="Reactome" id="R-MMU-166016">
    <property type="pathway name" value="Toll Like Receptor 4 (TLR4) Cascade"/>
</dbReference>
<dbReference type="Reactome" id="R-MMU-190873">
    <property type="pathway name" value="Gap junction degradation"/>
</dbReference>
<dbReference type="Reactome" id="R-MMU-196025">
    <property type="pathway name" value="Formation of annular gap junctions"/>
</dbReference>
<dbReference type="Reactome" id="R-MMU-203641">
    <property type="pathway name" value="NOSTRIN mediated eNOS trafficking"/>
</dbReference>
<dbReference type="Reactome" id="R-MMU-2132295">
    <property type="pathway name" value="MHC class II antigen presentation"/>
</dbReference>
<dbReference type="Reactome" id="R-MMU-432720">
    <property type="pathway name" value="Lysosome Vesicle Biogenesis"/>
</dbReference>
<dbReference type="Reactome" id="R-MMU-432722">
    <property type="pathway name" value="Golgi Associated Vesicle Biogenesis"/>
</dbReference>
<dbReference type="Reactome" id="R-MMU-437239">
    <property type="pathway name" value="Recycling pathway of L1"/>
</dbReference>
<dbReference type="Reactome" id="R-MMU-8856828">
    <property type="pathway name" value="Clathrin-mediated endocytosis"/>
</dbReference>
<dbReference type="BioGRID-ORCS" id="13430">
    <property type="hits" value="30 hits in 79 CRISPR screens"/>
</dbReference>
<dbReference type="CD-CODE" id="CE726F99">
    <property type="entry name" value="Postsynaptic density"/>
</dbReference>
<dbReference type="ChiTaRS" id="Dnm2">
    <property type="organism name" value="mouse"/>
</dbReference>
<dbReference type="PRO" id="PR:P39054"/>
<dbReference type="Proteomes" id="UP000000589">
    <property type="component" value="Chromosome 9"/>
</dbReference>
<dbReference type="RNAct" id="P39054">
    <property type="molecule type" value="protein"/>
</dbReference>
<dbReference type="Bgee" id="ENSMUSG00000033335">
    <property type="expression patterns" value="Expressed in granulocyte and 246 other cell types or tissues"/>
</dbReference>
<dbReference type="ExpressionAtlas" id="P39054">
    <property type="expression patterns" value="baseline and differential"/>
</dbReference>
<dbReference type="GO" id="GO:0070161">
    <property type="term" value="C:anchoring junction"/>
    <property type="evidence" value="ECO:0007669"/>
    <property type="project" value="UniProtKB-SubCell"/>
</dbReference>
<dbReference type="GO" id="GO:0030054">
    <property type="term" value="C:cell junction"/>
    <property type="evidence" value="ECO:0000250"/>
    <property type="project" value="UniProtKB"/>
</dbReference>
<dbReference type="GO" id="GO:0005814">
    <property type="term" value="C:centriole"/>
    <property type="evidence" value="ECO:0000250"/>
    <property type="project" value="UniProtKB"/>
</dbReference>
<dbReference type="GO" id="GO:0005813">
    <property type="term" value="C:centrosome"/>
    <property type="evidence" value="ECO:0000250"/>
    <property type="project" value="UniProtKB"/>
</dbReference>
<dbReference type="GO" id="GO:0005905">
    <property type="term" value="C:clathrin-coated pit"/>
    <property type="evidence" value="ECO:0000314"/>
    <property type="project" value="MGI"/>
</dbReference>
<dbReference type="GO" id="GO:0030136">
    <property type="term" value="C:clathrin-coated vesicle"/>
    <property type="evidence" value="ECO:0000250"/>
    <property type="project" value="UniProtKB"/>
</dbReference>
<dbReference type="GO" id="GO:0005768">
    <property type="term" value="C:endosome"/>
    <property type="evidence" value="ECO:0000250"/>
    <property type="project" value="UniProtKB"/>
</dbReference>
<dbReference type="GO" id="GO:0005874">
    <property type="term" value="C:microtubule"/>
    <property type="evidence" value="ECO:0000250"/>
    <property type="project" value="UniProtKB"/>
</dbReference>
<dbReference type="GO" id="GO:0030496">
    <property type="term" value="C:midbody"/>
    <property type="evidence" value="ECO:0007669"/>
    <property type="project" value="UniProtKB-SubCell"/>
</dbReference>
<dbReference type="GO" id="GO:0043005">
    <property type="term" value="C:neuron projection"/>
    <property type="evidence" value="ECO:0000250"/>
    <property type="project" value="UniProtKB"/>
</dbReference>
<dbReference type="GO" id="GO:0001891">
    <property type="term" value="C:phagocytic cup"/>
    <property type="evidence" value="ECO:0007669"/>
    <property type="project" value="UniProtKB-SubCell"/>
</dbReference>
<dbReference type="GO" id="GO:0030670">
    <property type="term" value="C:phagocytic vesicle membrane"/>
    <property type="evidence" value="ECO:0007669"/>
    <property type="project" value="UniProtKB-SubCell"/>
</dbReference>
<dbReference type="GO" id="GO:0001917">
    <property type="term" value="C:photoreceptor inner segment"/>
    <property type="evidence" value="ECO:0000314"/>
    <property type="project" value="MGI"/>
</dbReference>
<dbReference type="GO" id="GO:0002102">
    <property type="term" value="C:podosome"/>
    <property type="evidence" value="ECO:0007669"/>
    <property type="project" value="UniProtKB-SubCell"/>
</dbReference>
<dbReference type="GO" id="GO:0014069">
    <property type="term" value="C:postsynaptic density"/>
    <property type="evidence" value="ECO:0000250"/>
    <property type="project" value="UniProtKB"/>
</dbReference>
<dbReference type="GO" id="GO:0098793">
    <property type="term" value="C:presynapse"/>
    <property type="evidence" value="ECO:0007669"/>
    <property type="project" value="GOC"/>
</dbReference>
<dbReference type="GO" id="GO:0055037">
    <property type="term" value="C:recycling endosome"/>
    <property type="evidence" value="ECO:0000250"/>
    <property type="project" value="UniProtKB"/>
</dbReference>
<dbReference type="GO" id="GO:0001931">
    <property type="term" value="C:uropod"/>
    <property type="evidence" value="ECO:0000250"/>
    <property type="project" value="UniProtKB"/>
</dbReference>
<dbReference type="GO" id="GO:0005525">
    <property type="term" value="F:GTP binding"/>
    <property type="evidence" value="ECO:0007669"/>
    <property type="project" value="UniProtKB-KW"/>
</dbReference>
<dbReference type="GO" id="GO:0003924">
    <property type="term" value="F:GTPase activity"/>
    <property type="evidence" value="ECO:0000250"/>
    <property type="project" value="UniProtKB"/>
</dbReference>
<dbReference type="GO" id="GO:0005546">
    <property type="term" value="F:phosphatidylinositol-4,5-bisphosphate binding"/>
    <property type="evidence" value="ECO:0000250"/>
    <property type="project" value="UniProtKB"/>
</dbReference>
<dbReference type="GO" id="GO:0061572">
    <property type="term" value="P:actin filament bundle organization"/>
    <property type="evidence" value="ECO:0000250"/>
    <property type="project" value="UniProtKB"/>
</dbReference>
<dbReference type="GO" id="GO:0035904">
    <property type="term" value="P:aorta development"/>
    <property type="evidence" value="ECO:0000315"/>
    <property type="project" value="MGI"/>
</dbReference>
<dbReference type="GO" id="GO:0006914">
    <property type="term" value="P:autophagy"/>
    <property type="evidence" value="ECO:0000250"/>
    <property type="project" value="UniProtKB"/>
</dbReference>
<dbReference type="GO" id="GO:0007098">
    <property type="term" value="P:centrosome cycle"/>
    <property type="evidence" value="ECO:0000250"/>
    <property type="project" value="UniProtKB"/>
</dbReference>
<dbReference type="GO" id="GO:0060976">
    <property type="term" value="P:coronary vasculature development"/>
    <property type="evidence" value="ECO:0000315"/>
    <property type="project" value="MGI"/>
</dbReference>
<dbReference type="GO" id="GO:0097749">
    <property type="term" value="P:membrane tubulation"/>
    <property type="evidence" value="ECO:0000250"/>
    <property type="project" value="UniProtKB"/>
</dbReference>
<dbReference type="GO" id="GO:0048812">
    <property type="term" value="P:neuron projection morphogenesis"/>
    <property type="evidence" value="ECO:0000250"/>
    <property type="project" value="UniProtKB"/>
</dbReference>
<dbReference type="GO" id="GO:0006909">
    <property type="term" value="P:phagocytosis"/>
    <property type="evidence" value="ECO:0007669"/>
    <property type="project" value="UniProtKB-KW"/>
</dbReference>
<dbReference type="GO" id="GO:0051258">
    <property type="term" value="P:protein polymerization"/>
    <property type="evidence" value="ECO:0000250"/>
    <property type="project" value="UniProtKB"/>
</dbReference>
<dbReference type="GO" id="GO:0006898">
    <property type="term" value="P:receptor-mediated endocytosis"/>
    <property type="evidence" value="ECO:0000250"/>
    <property type="project" value="UniProtKB"/>
</dbReference>
<dbReference type="GO" id="GO:0030516">
    <property type="term" value="P:regulation of axon extension"/>
    <property type="evidence" value="ECO:0000250"/>
    <property type="project" value="UniProtKB"/>
</dbReference>
<dbReference type="GO" id="GO:0043149">
    <property type="term" value="P:stress fiber assembly"/>
    <property type="evidence" value="ECO:0000250"/>
    <property type="project" value="UniProtKB"/>
</dbReference>
<dbReference type="GO" id="GO:0048488">
    <property type="term" value="P:synaptic vesicle endocytosis"/>
    <property type="evidence" value="ECO:0000314"/>
    <property type="project" value="SynGO"/>
</dbReference>
<dbReference type="GO" id="GO:0003281">
    <property type="term" value="P:ventricular septum development"/>
    <property type="evidence" value="ECO:0000315"/>
    <property type="project" value="MGI"/>
</dbReference>
<dbReference type="GO" id="GO:0099050">
    <property type="term" value="P:vesicle scission"/>
    <property type="evidence" value="ECO:0000250"/>
    <property type="project" value="UniProtKB"/>
</dbReference>
<dbReference type="CDD" id="cd08771">
    <property type="entry name" value="DLP_1"/>
    <property type="match status" value="1"/>
</dbReference>
<dbReference type="CDD" id="cd01256">
    <property type="entry name" value="PH_dynamin"/>
    <property type="match status" value="1"/>
</dbReference>
<dbReference type="FunFam" id="1.20.120.1240:FF:000019">
    <property type="entry name" value="Dynamin 2"/>
    <property type="match status" value="1"/>
</dbReference>
<dbReference type="FunFam" id="1.20.120.1240:FF:000014">
    <property type="entry name" value="Dynamin 2b"/>
    <property type="match status" value="1"/>
</dbReference>
<dbReference type="FunFam" id="2.30.29.30:FF:000010">
    <property type="entry name" value="dynamin-1 isoform X2"/>
    <property type="match status" value="1"/>
</dbReference>
<dbReference type="FunFam" id="3.40.50.300:FF:000045">
    <property type="entry name" value="dynamin-1 isoform X2"/>
    <property type="match status" value="1"/>
</dbReference>
<dbReference type="Gene3D" id="1.20.120.1240">
    <property type="entry name" value="Dynamin, middle domain"/>
    <property type="match status" value="1"/>
</dbReference>
<dbReference type="Gene3D" id="3.40.50.300">
    <property type="entry name" value="P-loop containing nucleotide triphosphate hydrolases"/>
    <property type="match status" value="1"/>
</dbReference>
<dbReference type="Gene3D" id="2.30.29.30">
    <property type="entry name" value="Pleckstrin-homology domain (PH domain)/Phosphotyrosine-binding domain (PTB)"/>
    <property type="match status" value="1"/>
</dbReference>
<dbReference type="InterPro" id="IPR022812">
    <property type="entry name" value="Dynamin"/>
</dbReference>
<dbReference type="InterPro" id="IPR001401">
    <property type="entry name" value="Dynamin_GTPase"/>
</dbReference>
<dbReference type="InterPro" id="IPR019762">
    <property type="entry name" value="Dynamin_GTPase_CS"/>
</dbReference>
<dbReference type="InterPro" id="IPR045063">
    <property type="entry name" value="Dynamin_N"/>
</dbReference>
<dbReference type="InterPro" id="IPR000375">
    <property type="entry name" value="Dynamin_stalk"/>
</dbReference>
<dbReference type="InterPro" id="IPR030381">
    <property type="entry name" value="G_DYNAMIN_dom"/>
</dbReference>
<dbReference type="InterPro" id="IPR003130">
    <property type="entry name" value="GED"/>
</dbReference>
<dbReference type="InterPro" id="IPR020850">
    <property type="entry name" value="GED_dom"/>
</dbReference>
<dbReference type="InterPro" id="IPR027417">
    <property type="entry name" value="P-loop_NTPase"/>
</dbReference>
<dbReference type="InterPro" id="IPR011993">
    <property type="entry name" value="PH-like_dom_sf"/>
</dbReference>
<dbReference type="InterPro" id="IPR001849">
    <property type="entry name" value="PH_domain"/>
</dbReference>
<dbReference type="PANTHER" id="PTHR11566">
    <property type="entry name" value="DYNAMIN"/>
    <property type="match status" value="1"/>
</dbReference>
<dbReference type="PANTHER" id="PTHR11566:SF23">
    <property type="entry name" value="DYNAMIN-2"/>
    <property type="match status" value="1"/>
</dbReference>
<dbReference type="Pfam" id="PF01031">
    <property type="entry name" value="Dynamin_M"/>
    <property type="match status" value="1"/>
</dbReference>
<dbReference type="Pfam" id="PF00350">
    <property type="entry name" value="Dynamin_N"/>
    <property type="match status" value="1"/>
</dbReference>
<dbReference type="Pfam" id="PF02212">
    <property type="entry name" value="GED"/>
    <property type="match status" value="1"/>
</dbReference>
<dbReference type="Pfam" id="PF00169">
    <property type="entry name" value="PH"/>
    <property type="match status" value="1"/>
</dbReference>
<dbReference type="PRINTS" id="PR00195">
    <property type="entry name" value="DYNAMIN"/>
</dbReference>
<dbReference type="SMART" id="SM00053">
    <property type="entry name" value="DYNc"/>
    <property type="match status" value="1"/>
</dbReference>
<dbReference type="SMART" id="SM00302">
    <property type="entry name" value="GED"/>
    <property type="match status" value="1"/>
</dbReference>
<dbReference type="SMART" id="SM00233">
    <property type="entry name" value="PH"/>
    <property type="match status" value="1"/>
</dbReference>
<dbReference type="SUPFAM" id="SSF52540">
    <property type="entry name" value="P-loop containing nucleoside triphosphate hydrolases"/>
    <property type="match status" value="1"/>
</dbReference>
<dbReference type="SUPFAM" id="SSF50729">
    <property type="entry name" value="PH domain-like"/>
    <property type="match status" value="1"/>
</dbReference>
<dbReference type="PROSITE" id="PS00410">
    <property type="entry name" value="G_DYNAMIN_1"/>
    <property type="match status" value="1"/>
</dbReference>
<dbReference type="PROSITE" id="PS51718">
    <property type="entry name" value="G_DYNAMIN_2"/>
    <property type="match status" value="1"/>
</dbReference>
<dbReference type="PROSITE" id="PS51388">
    <property type="entry name" value="GED"/>
    <property type="match status" value="1"/>
</dbReference>
<dbReference type="PROSITE" id="PS50003">
    <property type="entry name" value="PH_DOMAIN"/>
    <property type="match status" value="1"/>
</dbReference>
<feature type="chain" id="PRO_0000206571" description="Dynamin-2">
    <location>
        <begin position="1"/>
        <end position="870"/>
    </location>
</feature>
<feature type="domain" description="Dynamin-type G" evidence="6">
    <location>
        <begin position="28"/>
        <end position="294"/>
    </location>
</feature>
<feature type="domain" description="PH" evidence="4">
    <location>
        <begin position="519"/>
        <end position="625"/>
    </location>
</feature>
<feature type="domain" description="GED" evidence="5">
    <location>
        <begin position="653"/>
        <end position="744"/>
    </location>
</feature>
<feature type="region of interest" description="G1 motif" evidence="6">
    <location>
        <begin position="38"/>
        <end position="45"/>
    </location>
</feature>
<feature type="region of interest" description="G2 motif" evidence="6">
    <location>
        <begin position="64"/>
        <end position="66"/>
    </location>
</feature>
<feature type="region of interest" description="G3 motif" evidence="6">
    <location>
        <begin position="136"/>
        <end position="139"/>
    </location>
</feature>
<feature type="region of interest" description="G4 motif" evidence="6">
    <location>
        <begin position="205"/>
        <end position="208"/>
    </location>
</feature>
<feature type="region of interest" description="G5 motif" evidence="6">
    <location>
        <begin position="235"/>
        <end position="238"/>
    </location>
</feature>
<feature type="region of interest" description="Disordered" evidence="7">
    <location>
        <begin position="741"/>
        <end position="870"/>
    </location>
</feature>
<feature type="compositionally biased region" description="Polar residues" evidence="7">
    <location>
        <begin position="756"/>
        <end position="767"/>
    </location>
</feature>
<feature type="compositionally biased region" description="Pro residues" evidence="7">
    <location>
        <begin position="826"/>
        <end position="846"/>
    </location>
</feature>
<feature type="compositionally biased region" description="Low complexity" evidence="7">
    <location>
        <begin position="847"/>
        <end position="864"/>
    </location>
</feature>
<feature type="binding site" evidence="3">
    <location>
        <position position="41"/>
    </location>
    <ligand>
        <name>GDP</name>
        <dbReference type="ChEBI" id="CHEBI:58189"/>
    </ligand>
</feature>
<feature type="binding site" evidence="3">
    <location>
        <position position="43"/>
    </location>
    <ligand>
        <name>GDP</name>
        <dbReference type="ChEBI" id="CHEBI:58189"/>
    </ligand>
</feature>
<feature type="binding site" evidence="3">
    <location>
        <position position="44"/>
    </location>
    <ligand>
        <name>GDP</name>
        <dbReference type="ChEBI" id="CHEBI:58189"/>
    </ligand>
</feature>
<feature type="binding site" evidence="3">
    <location>
        <position position="45"/>
    </location>
    <ligand>
        <name>GDP</name>
        <dbReference type="ChEBI" id="CHEBI:58189"/>
    </ligand>
</feature>
<feature type="binding site" evidence="3">
    <location>
        <position position="46"/>
    </location>
    <ligand>
        <name>GDP</name>
        <dbReference type="ChEBI" id="CHEBI:58189"/>
    </ligand>
</feature>
<feature type="binding site" evidence="3">
    <location>
        <position position="59"/>
    </location>
    <ligand>
        <name>GDP</name>
        <dbReference type="ChEBI" id="CHEBI:58189"/>
    </ligand>
</feature>
<feature type="binding site" evidence="3">
    <location>
        <position position="60"/>
    </location>
    <ligand>
        <name>GDP</name>
        <dbReference type="ChEBI" id="CHEBI:58189"/>
    </ligand>
</feature>
<feature type="binding site" evidence="3">
    <location>
        <position position="206"/>
    </location>
    <ligand>
        <name>GDP</name>
        <dbReference type="ChEBI" id="CHEBI:58189"/>
    </ligand>
</feature>
<feature type="binding site" evidence="3">
    <location>
        <position position="208"/>
    </location>
    <ligand>
        <name>GDP</name>
        <dbReference type="ChEBI" id="CHEBI:58189"/>
    </ligand>
</feature>
<feature type="binding site" evidence="3">
    <location>
        <position position="211"/>
    </location>
    <ligand>
        <name>GDP</name>
        <dbReference type="ChEBI" id="CHEBI:58189"/>
    </ligand>
</feature>
<feature type="binding site" evidence="3">
    <location>
        <position position="236"/>
    </location>
    <ligand>
        <name>GDP</name>
        <dbReference type="ChEBI" id="CHEBI:58189"/>
    </ligand>
</feature>
<feature type="binding site" evidence="3">
    <location>
        <position position="237"/>
    </location>
    <ligand>
        <name>GDP</name>
        <dbReference type="ChEBI" id="CHEBI:58189"/>
    </ligand>
</feature>
<feature type="binding site" evidence="3">
    <location>
        <position position="239"/>
    </location>
    <ligand>
        <name>GDP</name>
        <dbReference type="ChEBI" id="CHEBI:58189"/>
    </ligand>
</feature>
<feature type="modified residue" description="Phosphotyrosine" evidence="1">
    <location>
        <position position="231"/>
    </location>
</feature>
<feature type="modified residue" description="N6-acetyllysine" evidence="19">
    <location>
        <position position="299"/>
    </location>
</feature>
<feature type="modified residue" description="Phosphotyrosine" evidence="1">
    <location>
        <position position="597"/>
    </location>
</feature>
<feature type="modified residue" description="N6-acetyllysine" evidence="2">
    <location>
        <position position="598"/>
    </location>
</feature>
<feature type="modified residue" description="Phosphothreonine" evidence="2">
    <location>
        <position position="755"/>
    </location>
</feature>
<feature type="modified residue" description="Phosphoserine; by CDK1" evidence="1">
    <location>
        <position position="764"/>
    </location>
</feature>
<feature type="splice variant" id="VSP_001326" description="In isoform 2." evidence="15">
    <location>
        <begin position="516"/>
        <end position="519"/>
    </location>
</feature>
<feature type="mutagenesis site" description="Apoptotic cell corpse-containing phagosomes fail to mature into acidic phagosomes. Loss of PIK3C3 and RAB5A recruitment to phagosomes." evidence="11">
    <original>K</original>
    <variation>A</variation>
    <location>
        <position position="44"/>
    </location>
</feature>
<feature type="sequence conflict" description="In Ref. 1; AAA40523." evidence="16" ref="1">
    <original>RS</original>
    <variation>HG</variation>
    <location>
        <begin position="297"/>
        <end position="298"/>
    </location>
</feature>
<feature type="sequence conflict" description="In Ref. 2; BAB23745." evidence="16" ref="2">
    <original>SRRAPAAPSRPTIIRPAEPSLLD</original>
    <variation>RRPPPLAPARPFF</variation>
    <location>
        <begin position="848"/>
        <end position="870"/>
    </location>
</feature>
<organism>
    <name type="scientific">Mus musculus</name>
    <name type="common">Mouse</name>
    <dbReference type="NCBI Taxonomy" id="10090"/>
    <lineage>
        <taxon>Eukaryota</taxon>
        <taxon>Metazoa</taxon>
        <taxon>Chordata</taxon>
        <taxon>Craniata</taxon>
        <taxon>Vertebrata</taxon>
        <taxon>Euteleostomi</taxon>
        <taxon>Mammalia</taxon>
        <taxon>Eutheria</taxon>
        <taxon>Euarchontoglires</taxon>
        <taxon>Glires</taxon>
        <taxon>Rodentia</taxon>
        <taxon>Myomorpha</taxon>
        <taxon>Muroidea</taxon>
        <taxon>Muridae</taxon>
        <taxon>Murinae</taxon>
        <taxon>Mus</taxon>
        <taxon>Mus</taxon>
    </lineage>
</organism>
<name>DYN2_MOUSE</name>
<protein>
    <recommendedName>
        <fullName evidence="16">Dynamin-2</fullName>
        <ecNumber evidence="1 2">3.6.5.5</ecNumber>
    </recommendedName>
    <alternativeName>
        <fullName>Dynamin UDNM</fullName>
    </alternativeName>
</protein>
<accession>P39054</accession>
<accession>Q9DBE1</accession>
<sequence>MGNRGMEELIPLVNKLQDAFSSIGQSCHLDLPQIAVVGGQSAGKSSVLENFVGRDFLPRGSGIVTRRPLILQLIFSKTEYAEFLHCKSKKFTDFDEVRQEIEAETDRVTGTNKGISPVPINLRVYSPHVLNLTLIDLPGITKVPVGDQPPDIEYQIKDMILQFISRESSLILAVTPANMDLANSDALKLAKEVDPQGLRTIGVITKLDLMDEGTDARDVLENKLLPLRRGYIGVVNRSQKDIEGKKDIRAALAAERKFFLSHPAYRHMADRMGTPHLQKTLNQQLTNHIRESLPTLRSKLQSQLLSLEKEVEEYKNFRPDDPTRKTKALLQMVQQFGVDFEKRIEGSGDQVDTLELSGGARINRIFHERFPFELVKMEFDEKDLRREISYAIKNIHGVRTGLFTPDLAFEAIVKKQVVKLKEPCLKCVDLVIQELISTVRQCTSKLSSYPRLREETERIVTTYIREREGRTKDQILLLIDIEQSYINTNHEDFIGFANAQQRSTQLNKKRAIPNQGEILVIRRGWLTINNISLMKGGSKEYWFVLTAESLSWYKDEEEKEKKYMLPLDNLKIRDVEKGFMSNKHVFAIFNTEQRNVYKDLRQIELACDSQEDVDSWKASFLRAGVYPEKDQAENEDGAQENTFSMDPQLERQVETIRNLVDSYVAIINKSIRDLMPKTIMHLMINNTKAFIHHELLAYLYSSADQSSLMEESAEQAQRRDDMLRMYHALKEALNIIGDISTSTVSTPVPPPVDDTWLQNTSGHSPTPQRRPVSSVHPPGRPPAVRGPTPGPPLIPMPVGATSSFSAPPIPSRPGPQSVFANNDPFSAPPQIPSRPARIPPGIPPGVPSRRAPAAPSRPTIIRPAEPSLLD</sequence>